<proteinExistence type="evidence at protein level"/>
<evidence type="ECO:0000255" key="1">
    <source>
        <dbReference type="HAMAP-Rule" id="MF_00436"/>
    </source>
</evidence>
<evidence type="ECO:0000255" key="2">
    <source>
        <dbReference type="PROSITE-ProRule" id="PRU01346"/>
    </source>
</evidence>
<evidence type="ECO:0000256" key="3">
    <source>
        <dbReference type="SAM" id="MobiDB-lite"/>
    </source>
</evidence>
<evidence type="ECO:0007829" key="4">
    <source>
        <dbReference type="PDB" id="7OG8"/>
    </source>
</evidence>
<name>HFQ_NEIMF</name>
<accession>A1KT11</accession>
<gene>
    <name evidence="1" type="primary">hfq</name>
    <name type="ordered locus">NMC0702</name>
</gene>
<sequence>MTAKGQMLQDPFLNALRKEHVPVSIYLVNGIKLQGQVESFDQYVVLLRNTSVTQMVYKHAISTIVPARSVNLQHENRPQAAPASTLVQVETVQQPAE</sequence>
<reference key="1">
    <citation type="journal article" date="2007" name="PLoS Genet.">
        <title>Meningococcal genetic variation mechanisms viewed through comparative analysis of serogroup C strain FAM18.</title>
        <authorList>
            <person name="Bentley S.D."/>
            <person name="Vernikos G.S."/>
            <person name="Snyder L.A.S."/>
            <person name="Churcher C."/>
            <person name="Arrowsmith C."/>
            <person name="Chillingworth T."/>
            <person name="Cronin A."/>
            <person name="Davis P.H."/>
            <person name="Holroyd N.E."/>
            <person name="Jagels K."/>
            <person name="Maddison M."/>
            <person name="Moule S."/>
            <person name="Rabbinowitsch E."/>
            <person name="Sharp S."/>
            <person name="Unwin L."/>
            <person name="Whitehead S."/>
            <person name="Quail M.A."/>
            <person name="Achtman M."/>
            <person name="Barrell B.G."/>
            <person name="Saunders N.J."/>
            <person name="Parkhill J."/>
        </authorList>
    </citation>
    <scope>NUCLEOTIDE SEQUENCE [LARGE SCALE GENOMIC DNA]</scope>
    <source>
        <strain>ATCC 700532 / DSM 15464 / FAM18</strain>
    </source>
</reference>
<protein>
    <recommendedName>
        <fullName evidence="1">RNA-binding protein Hfq</fullName>
    </recommendedName>
</protein>
<feature type="chain" id="PRO_1000025921" description="RNA-binding protein Hfq">
    <location>
        <begin position="1"/>
        <end position="97"/>
    </location>
</feature>
<feature type="domain" description="Sm" evidence="2">
    <location>
        <begin position="10"/>
        <end position="70"/>
    </location>
</feature>
<feature type="region of interest" description="Disordered" evidence="3">
    <location>
        <begin position="75"/>
        <end position="97"/>
    </location>
</feature>
<feature type="compositionally biased region" description="Polar residues" evidence="3">
    <location>
        <begin position="85"/>
        <end position="97"/>
    </location>
</feature>
<feature type="helix" evidence="4">
    <location>
        <begin position="9"/>
        <end position="19"/>
    </location>
</feature>
<feature type="strand" evidence="4">
    <location>
        <begin position="23"/>
        <end position="27"/>
    </location>
</feature>
<feature type="strand" evidence="4">
    <location>
        <begin position="32"/>
        <end position="40"/>
    </location>
</feature>
<feature type="strand" evidence="4">
    <location>
        <begin position="42"/>
        <end position="48"/>
    </location>
</feature>
<feature type="strand" evidence="4">
    <location>
        <begin position="53"/>
        <end position="57"/>
    </location>
</feature>
<feature type="helix" evidence="4">
    <location>
        <begin position="58"/>
        <end position="60"/>
    </location>
</feature>
<feature type="strand" evidence="4">
    <location>
        <begin position="61"/>
        <end position="68"/>
    </location>
</feature>
<comment type="function">
    <text evidence="1">RNA chaperone that binds small regulatory RNA (sRNAs) and mRNAs to facilitate mRNA translational regulation in response to envelope stress, environmental stress and changes in metabolite concentrations. Also binds with high specificity to tRNAs.</text>
</comment>
<comment type="subunit">
    <text evidence="1">Homohexamer.</text>
</comment>
<comment type="similarity">
    <text evidence="1">Belongs to the Hfq family.</text>
</comment>
<dbReference type="EMBL" id="AM421808">
    <property type="protein sequence ID" value="CAM09993.1"/>
    <property type="molecule type" value="Genomic_DNA"/>
</dbReference>
<dbReference type="RefSeq" id="WP_002236839.1">
    <property type="nucleotide sequence ID" value="NC_008767.1"/>
</dbReference>
<dbReference type="PDB" id="7OG8">
    <property type="method" value="X-ray"/>
    <property type="resolution" value="1.40 A"/>
    <property type="chains" value="A=5-72"/>
</dbReference>
<dbReference type="PDBsum" id="7OG8"/>
<dbReference type="SMR" id="A1KT11"/>
<dbReference type="GeneID" id="86876045"/>
<dbReference type="KEGG" id="nmc:NMC0702"/>
<dbReference type="HOGENOM" id="CLU_113688_2_2_4"/>
<dbReference type="Proteomes" id="UP000002286">
    <property type="component" value="Chromosome"/>
</dbReference>
<dbReference type="GO" id="GO:0005829">
    <property type="term" value="C:cytosol"/>
    <property type="evidence" value="ECO:0007669"/>
    <property type="project" value="TreeGrafter"/>
</dbReference>
<dbReference type="GO" id="GO:0003723">
    <property type="term" value="F:RNA binding"/>
    <property type="evidence" value="ECO:0007669"/>
    <property type="project" value="UniProtKB-UniRule"/>
</dbReference>
<dbReference type="GO" id="GO:0006355">
    <property type="term" value="P:regulation of DNA-templated transcription"/>
    <property type="evidence" value="ECO:0007669"/>
    <property type="project" value="InterPro"/>
</dbReference>
<dbReference type="GO" id="GO:0043487">
    <property type="term" value="P:regulation of RNA stability"/>
    <property type="evidence" value="ECO:0007669"/>
    <property type="project" value="TreeGrafter"/>
</dbReference>
<dbReference type="GO" id="GO:0045974">
    <property type="term" value="P:regulation of translation, ncRNA-mediated"/>
    <property type="evidence" value="ECO:0007669"/>
    <property type="project" value="TreeGrafter"/>
</dbReference>
<dbReference type="CDD" id="cd01716">
    <property type="entry name" value="Hfq"/>
    <property type="match status" value="1"/>
</dbReference>
<dbReference type="FunFam" id="2.30.30.100:FF:000001">
    <property type="entry name" value="RNA-binding protein Hfq"/>
    <property type="match status" value="1"/>
</dbReference>
<dbReference type="Gene3D" id="2.30.30.100">
    <property type="match status" value="1"/>
</dbReference>
<dbReference type="HAMAP" id="MF_00436">
    <property type="entry name" value="Hfq"/>
    <property type="match status" value="1"/>
</dbReference>
<dbReference type="InterPro" id="IPR005001">
    <property type="entry name" value="Hfq"/>
</dbReference>
<dbReference type="InterPro" id="IPR010920">
    <property type="entry name" value="LSM_dom_sf"/>
</dbReference>
<dbReference type="InterPro" id="IPR047575">
    <property type="entry name" value="Sm"/>
</dbReference>
<dbReference type="NCBIfam" id="TIGR02383">
    <property type="entry name" value="Hfq"/>
    <property type="match status" value="1"/>
</dbReference>
<dbReference type="NCBIfam" id="NF001602">
    <property type="entry name" value="PRK00395.1"/>
    <property type="match status" value="1"/>
</dbReference>
<dbReference type="PANTHER" id="PTHR34772">
    <property type="entry name" value="RNA-BINDING PROTEIN HFQ"/>
    <property type="match status" value="1"/>
</dbReference>
<dbReference type="PANTHER" id="PTHR34772:SF1">
    <property type="entry name" value="RNA-BINDING PROTEIN HFQ"/>
    <property type="match status" value="1"/>
</dbReference>
<dbReference type="Pfam" id="PF17209">
    <property type="entry name" value="Hfq"/>
    <property type="match status" value="1"/>
</dbReference>
<dbReference type="SUPFAM" id="SSF50182">
    <property type="entry name" value="Sm-like ribonucleoproteins"/>
    <property type="match status" value="1"/>
</dbReference>
<dbReference type="PROSITE" id="PS52002">
    <property type="entry name" value="SM"/>
    <property type="match status" value="1"/>
</dbReference>
<keyword id="KW-0002">3D-structure</keyword>
<keyword id="KW-0694">RNA-binding</keyword>
<keyword id="KW-0346">Stress response</keyword>
<organism>
    <name type="scientific">Neisseria meningitidis serogroup C / serotype 2a (strain ATCC 700532 / DSM 15464 / FAM18)</name>
    <dbReference type="NCBI Taxonomy" id="272831"/>
    <lineage>
        <taxon>Bacteria</taxon>
        <taxon>Pseudomonadati</taxon>
        <taxon>Pseudomonadota</taxon>
        <taxon>Betaproteobacteria</taxon>
        <taxon>Neisseriales</taxon>
        <taxon>Neisseriaceae</taxon>
        <taxon>Neisseria</taxon>
    </lineage>
</organism>